<feature type="chain" id="PRO_1000065987" description="Alanine racemase">
    <location>
        <begin position="1"/>
        <end position="357"/>
    </location>
</feature>
<feature type="active site" description="Proton acceptor; specific for D-alanine" evidence="1">
    <location>
        <position position="34"/>
    </location>
</feature>
<feature type="active site" description="Proton acceptor; specific for L-alanine" evidence="1">
    <location>
        <position position="252"/>
    </location>
</feature>
<feature type="binding site" evidence="1">
    <location>
        <position position="127"/>
    </location>
    <ligand>
        <name>substrate</name>
    </ligand>
</feature>
<feature type="binding site" evidence="1">
    <location>
        <position position="301"/>
    </location>
    <ligand>
        <name>substrate</name>
    </ligand>
</feature>
<feature type="modified residue" description="N6-(pyridoxal phosphate)lysine" evidence="1">
    <location>
        <position position="34"/>
    </location>
</feature>
<accession>A5EW54</accession>
<evidence type="ECO:0000255" key="1">
    <source>
        <dbReference type="HAMAP-Rule" id="MF_01201"/>
    </source>
</evidence>
<organism>
    <name type="scientific">Dichelobacter nodosus (strain VCS1703A)</name>
    <dbReference type="NCBI Taxonomy" id="246195"/>
    <lineage>
        <taxon>Bacteria</taxon>
        <taxon>Pseudomonadati</taxon>
        <taxon>Pseudomonadota</taxon>
        <taxon>Gammaproteobacteria</taxon>
        <taxon>Cardiobacteriales</taxon>
        <taxon>Cardiobacteriaceae</taxon>
        <taxon>Dichelobacter</taxon>
    </lineage>
</organism>
<sequence>MRALKKIINLNALRHNWALIKQRSLPATPMVVLKADAYGHGMTTVAKTLDDARYFAVSCIEEAIALRHLGIDTPVVLLEGVYRADELLLCEYYQFDTLVHNFRQMQWLKEFNGSVKAWLKVDSGMHRLGFTQDEIAEAFAQAHSLPVNIQWQGVITHFACSDEDDLTHAKKQLACMDRLVLPAHWKRCYANSAAIFALPQAHYDYTRSGIMLYGLSPFMHGDGSAYGLQPVMTVITEILAVRHLEKNETAGYGQGFTAPESGWLATIALGYGDGFARTITSGAVPVLIAGQRYPLVGRVAMDMAMVWLGSDRYAEGTIVELFGSHLPTEEVARAAGTIPHTLTTMLMPRVHVEIVGG</sequence>
<protein>
    <recommendedName>
        <fullName evidence="1">Alanine racemase</fullName>
        <ecNumber evidence="1">5.1.1.1</ecNumber>
    </recommendedName>
</protein>
<reference key="1">
    <citation type="journal article" date="2007" name="Nat. Biotechnol.">
        <title>Genome sequence and identification of candidate vaccine antigens from the animal pathogen Dichelobacter nodosus.</title>
        <authorList>
            <person name="Myers G.S.A."/>
            <person name="Parker D."/>
            <person name="Al-Hasani K."/>
            <person name="Kennan R.M."/>
            <person name="Seemann T."/>
            <person name="Ren Q."/>
            <person name="Badger J.H."/>
            <person name="Selengut J.D."/>
            <person name="Deboy R.T."/>
            <person name="Tettelin H."/>
            <person name="Boyce J.D."/>
            <person name="McCarl V.P."/>
            <person name="Han X."/>
            <person name="Nelson W.C."/>
            <person name="Madupu R."/>
            <person name="Mohamoud Y."/>
            <person name="Holley T."/>
            <person name="Fedorova N."/>
            <person name="Khouri H."/>
            <person name="Bottomley S.P."/>
            <person name="Whittington R.J."/>
            <person name="Adler B."/>
            <person name="Songer J.G."/>
            <person name="Rood J.I."/>
            <person name="Paulsen I.T."/>
        </authorList>
    </citation>
    <scope>NUCLEOTIDE SEQUENCE [LARGE SCALE GENOMIC DNA]</scope>
    <source>
        <strain>VCS1703A</strain>
    </source>
</reference>
<comment type="function">
    <text evidence="1">Catalyzes the interconversion of L-alanine and D-alanine. May also act on other amino acids.</text>
</comment>
<comment type="catalytic activity">
    <reaction evidence="1">
        <text>L-alanine = D-alanine</text>
        <dbReference type="Rhea" id="RHEA:20249"/>
        <dbReference type="ChEBI" id="CHEBI:57416"/>
        <dbReference type="ChEBI" id="CHEBI:57972"/>
        <dbReference type="EC" id="5.1.1.1"/>
    </reaction>
</comment>
<comment type="cofactor">
    <cofactor evidence="1">
        <name>pyridoxal 5'-phosphate</name>
        <dbReference type="ChEBI" id="CHEBI:597326"/>
    </cofactor>
</comment>
<comment type="pathway">
    <text evidence="1">Amino-acid biosynthesis; D-alanine biosynthesis; D-alanine from L-alanine: step 1/1.</text>
</comment>
<comment type="similarity">
    <text evidence="1">Belongs to the alanine racemase family.</text>
</comment>
<proteinExistence type="inferred from homology"/>
<gene>
    <name type="primary">alr</name>
    <name type="ordered locus">DNO_0325</name>
</gene>
<name>ALR_DICNV</name>
<dbReference type="EC" id="5.1.1.1" evidence="1"/>
<dbReference type="EMBL" id="CP000513">
    <property type="protein sequence ID" value="ABQ13078.1"/>
    <property type="molecule type" value="Genomic_DNA"/>
</dbReference>
<dbReference type="RefSeq" id="WP_012030669.1">
    <property type="nucleotide sequence ID" value="NC_009446.1"/>
</dbReference>
<dbReference type="SMR" id="A5EW54"/>
<dbReference type="STRING" id="246195.DNO_0325"/>
<dbReference type="KEGG" id="dno:DNO_0325"/>
<dbReference type="eggNOG" id="COG0787">
    <property type="taxonomic scope" value="Bacteria"/>
</dbReference>
<dbReference type="HOGENOM" id="CLU_028393_1_0_6"/>
<dbReference type="OrthoDB" id="9813814at2"/>
<dbReference type="UniPathway" id="UPA00042">
    <property type="reaction ID" value="UER00497"/>
</dbReference>
<dbReference type="Proteomes" id="UP000000248">
    <property type="component" value="Chromosome"/>
</dbReference>
<dbReference type="GO" id="GO:0005829">
    <property type="term" value="C:cytosol"/>
    <property type="evidence" value="ECO:0007669"/>
    <property type="project" value="TreeGrafter"/>
</dbReference>
<dbReference type="GO" id="GO:0008784">
    <property type="term" value="F:alanine racemase activity"/>
    <property type="evidence" value="ECO:0007669"/>
    <property type="project" value="UniProtKB-UniRule"/>
</dbReference>
<dbReference type="GO" id="GO:0030170">
    <property type="term" value="F:pyridoxal phosphate binding"/>
    <property type="evidence" value="ECO:0007669"/>
    <property type="project" value="UniProtKB-UniRule"/>
</dbReference>
<dbReference type="GO" id="GO:0030632">
    <property type="term" value="P:D-alanine biosynthetic process"/>
    <property type="evidence" value="ECO:0007669"/>
    <property type="project" value="UniProtKB-UniRule"/>
</dbReference>
<dbReference type="CDD" id="cd06827">
    <property type="entry name" value="PLPDE_III_AR_proteobact"/>
    <property type="match status" value="1"/>
</dbReference>
<dbReference type="FunFam" id="3.20.20.10:FF:000002">
    <property type="entry name" value="Alanine racemase"/>
    <property type="match status" value="1"/>
</dbReference>
<dbReference type="Gene3D" id="3.20.20.10">
    <property type="entry name" value="Alanine racemase"/>
    <property type="match status" value="1"/>
</dbReference>
<dbReference type="Gene3D" id="2.40.37.10">
    <property type="entry name" value="Lyase, Ornithine Decarboxylase, Chain A, domain 1"/>
    <property type="match status" value="1"/>
</dbReference>
<dbReference type="HAMAP" id="MF_01201">
    <property type="entry name" value="Ala_racemase"/>
    <property type="match status" value="1"/>
</dbReference>
<dbReference type="InterPro" id="IPR000821">
    <property type="entry name" value="Ala_racemase"/>
</dbReference>
<dbReference type="InterPro" id="IPR009006">
    <property type="entry name" value="Ala_racemase/Decarboxylase_C"/>
</dbReference>
<dbReference type="InterPro" id="IPR011079">
    <property type="entry name" value="Ala_racemase_C"/>
</dbReference>
<dbReference type="InterPro" id="IPR001608">
    <property type="entry name" value="Ala_racemase_N"/>
</dbReference>
<dbReference type="InterPro" id="IPR020622">
    <property type="entry name" value="Ala_racemase_pyridoxalP-BS"/>
</dbReference>
<dbReference type="InterPro" id="IPR029066">
    <property type="entry name" value="PLP-binding_barrel"/>
</dbReference>
<dbReference type="NCBIfam" id="TIGR00492">
    <property type="entry name" value="alr"/>
    <property type="match status" value="1"/>
</dbReference>
<dbReference type="PANTHER" id="PTHR30511">
    <property type="entry name" value="ALANINE RACEMASE"/>
    <property type="match status" value="1"/>
</dbReference>
<dbReference type="PANTHER" id="PTHR30511:SF0">
    <property type="entry name" value="ALANINE RACEMASE, CATABOLIC-RELATED"/>
    <property type="match status" value="1"/>
</dbReference>
<dbReference type="Pfam" id="PF00842">
    <property type="entry name" value="Ala_racemase_C"/>
    <property type="match status" value="1"/>
</dbReference>
<dbReference type="Pfam" id="PF01168">
    <property type="entry name" value="Ala_racemase_N"/>
    <property type="match status" value="1"/>
</dbReference>
<dbReference type="PRINTS" id="PR00992">
    <property type="entry name" value="ALARACEMASE"/>
</dbReference>
<dbReference type="SMART" id="SM01005">
    <property type="entry name" value="Ala_racemase_C"/>
    <property type="match status" value="1"/>
</dbReference>
<dbReference type="SUPFAM" id="SSF50621">
    <property type="entry name" value="Alanine racemase C-terminal domain-like"/>
    <property type="match status" value="1"/>
</dbReference>
<dbReference type="SUPFAM" id="SSF51419">
    <property type="entry name" value="PLP-binding barrel"/>
    <property type="match status" value="1"/>
</dbReference>
<dbReference type="PROSITE" id="PS00395">
    <property type="entry name" value="ALANINE_RACEMASE"/>
    <property type="match status" value="1"/>
</dbReference>
<keyword id="KW-0413">Isomerase</keyword>
<keyword id="KW-0663">Pyridoxal phosphate</keyword>
<keyword id="KW-1185">Reference proteome</keyword>